<accession>C5K1L1</accession>
<accession>A0A179UZJ3</accession>
<organism>
    <name type="scientific">Blastomyces gilchristii (strain SLH14081)</name>
    <name type="common">Blastomyces dermatitidis</name>
    <dbReference type="NCBI Taxonomy" id="559298"/>
    <lineage>
        <taxon>Eukaryota</taxon>
        <taxon>Fungi</taxon>
        <taxon>Dikarya</taxon>
        <taxon>Ascomycota</taxon>
        <taxon>Pezizomycotina</taxon>
        <taxon>Eurotiomycetes</taxon>
        <taxon>Eurotiomycetidae</taxon>
        <taxon>Onygenales</taxon>
        <taxon>Ajellomycetaceae</taxon>
        <taxon>Blastomyces</taxon>
    </lineage>
</organism>
<feature type="transit peptide" description="Mitochondrion" evidence="2">
    <location>
        <begin position="1"/>
        <end status="unknown"/>
    </location>
</feature>
<feature type="chain" id="PRO_0000405478" description="Mitochondrial zinc maintenance protein 1, mitochondrial">
    <location>
        <begin status="unknown"/>
        <end position="124"/>
    </location>
</feature>
<protein>
    <recommendedName>
        <fullName>Mitochondrial zinc maintenance protein 1, mitochondrial</fullName>
    </recommendedName>
</protein>
<sequence>MAATPVPTALGAYRLLLRATRIAFHGDFTTLHAARAEARKQFDQHRELGVDTPMRIQHAVETAEILRTNVVQGIKVSDAGEDTDRYELRIHEHIERGDNDTIKTAGKNKKVKVAVGKTCSNTQS</sequence>
<proteinExistence type="inferred from homology"/>
<reference key="1">
    <citation type="journal article" date="2015" name="PLoS Genet.">
        <title>The dynamic genome and transcriptome of the human fungal pathogen Blastomyces and close relative Emmonsia.</title>
        <authorList>
            <person name="Munoz J.F."/>
            <person name="Gauthier G.M."/>
            <person name="Desjardins C.A."/>
            <person name="Gallo J.E."/>
            <person name="Holder J."/>
            <person name="Sullivan T.D."/>
            <person name="Marty A.J."/>
            <person name="Carmen J.C."/>
            <person name="Chen Z."/>
            <person name="Ding L."/>
            <person name="Gujja S."/>
            <person name="Magrini V."/>
            <person name="Misas E."/>
            <person name="Mitreva M."/>
            <person name="Priest M."/>
            <person name="Saif S."/>
            <person name="Whiston E.A."/>
            <person name="Young S."/>
            <person name="Zeng Q."/>
            <person name="Goldman W.E."/>
            <person name="Mardis E.R."/>
            <person name="Taylor J.W."/>
            <person name="McEwen J.G."/>
            <person name="Clay O.K."/>
            <person name="Klein B.S."/>
            <person name="Cuomo C.A."/>
        </authorList>
    </citation>
    <scope>NUCLEOTIDE SEQUENCE [LARGE SCALE GENOMIC DNA]</scope>
    <source>
        <strain>SLH14081</strain>
    </source>
</reference>
<dbReference type="EMBL" id="GG657474">
    <property type="protein sequence ID" value="OAT13504.1"/>
    <property type="molecule type" value="Genomic_DNA"/>
</dbReference>
<dbReference type="SMR" id="C5K1L1"/>
<dbReference type="STRING" id="559298.C5K1L1"/>
<dbReference type="VEuPathDB" id="FungiDB:BDBG_08698"/>
<dbReference type="HOGENOM" id="CLU_147114_2_0_1"/>
<dbReference type="Proteomes" id="UP000002038">
    <property type="component" value="Unassembled WGS sequence"/>
</dbReference>
<dbReference type="GO" id="GO:0005759">
    <property type="term" value="C:mitochondrial matrix"/>
    <property type="evidence" value="ECO:0007669"/>
    <property type="project" value="UniProtKB-SubCell"/>
</dbReference>
<dbReference type="GO" id="GO:0044183">
    <property type="term" value="F:protein folding chaperone"/>
    <property type="evidence" value="ECO:0007669"/>
    <property type="project" value="TreeGrafter"/>
</dbReference>
<dbReference type="GO" id="GO:0034551">
    <property type="term" value="P:mitochondrial respiratory chain complex III assembly"/>
    <property type="evidence" value="ECO:0007669"/>
    <property type="project" value="InterPro"/>
</dbReference>
<dbReference type="CDD" id="cd20267">
    <property type="entry name" value="Complex1_LYR_LYRM7"/>
    <property type="match status" value="1"/>
</dbReference>
<dbReference type="InterPro" id="IPR045298">
    <property type="entry name" value="Complex1_LYR_LYRM7"/>
</dbReference>
<dbReference type="InterPro" id="IPR050435">
    <property type="entry name" value="MZM1/LYRM7"/>
</dbReference>
<dbReference type="PANTHER" id="PTHR46749">
    <property type="entry name" value="COMPLEX III ASSEMBLY FACTOR LYRM7"/>
    <property type="match status" value="1"/>
</dbReference>
<dbReference type="PANTHER" id="PTHR46749:SF1">
    <property type="entry name" value="COMPLEX III ASSEMBLY FACTOR LYRM7"/>
    <property type="match status" value="1"/>
</dbReference>
<comment type="function">
    <text evidence="1">Assembly factor required for Rieske Fe-S protein RIP1 incorporation into the cytochrome b-c1 (CIII) complex. Functions as a chaperone, binding to this subunit within the mitochondrial matrix and stabilizing it prior to its translocation and insertion into the late CIII dimeric intermediate within the mitochondrial inner membrane. Modulates the mitochondrial matrix zinc pool (By similarity).</text>
</comment>
<comment type="subunit">
    <text evidence="1">Interacts with RIP1.</text>
</comment>
<comment type="subcellular location">
    <subcellularLocation>
        <location evidence="1">Mitochondrion matrix</location>
    </subcellularLocation>
</comment>
<comment type="similarity">
    <text evidence="3">Belongs to the complex I LYR family. MZM1 subfamily.</text>
</comment>
<name>MZM1_BLAGS</name>
<evidence type="ECO:0000250" key="1"/>
<evidence type="ECO:0000255" key="2"/>
<evidence type="ECO:0000305" key="3"/>
<gene>
    <name type="primary">MZM1</name>
    <name type="ORF">BDBG_08698</name>
</gene>
<keyword id="KW-0143">Chaperone</keyword>
<keyword id="KW-0496">Mitochondrion</keyword>
<keyword id="KW-1185">Reference proteome</keyword>
<keyword id="KW-0809">Transit peptide</keyword>